<name>RS5_RHORT</name>
<comment type="function">
    <text evidence="1">With S4 and S12 plays an important role in translational accuracy.</text>
</comment>
<comment type="function">
    <text evidence="1">Located at the back of the 30S subunit body where it stabilizes the conformation of the head with respect to the body.</text>
</comment>
<comment type="subunit">
    <text evidence="1">Part of the 30S ribosomal subunit. Contacts proteins S4 and S8.</text>
</comment>
<comment type="domain">
    <text>The N-terminal domain interacts with the head of the 30S subunit; the C-terminal domain interacts with the body and contacts protein S4. The interaction surface between S4 and S5 is involved in control of translational fidelity.</text>
</comment>
<comment type="similarity">
    <text evidence="1">Belongs to the universal ribosomal protein uS5 family.</text>
</comment>
<reference key="1">
    <citation type="journal article" date="2011" name="Stand. Genomic Sci.">
        <title>Complete genome sequence of Rhodospirillum rubrum type strain (S1).</title>
        <authorList>
            <person name="Munk A.C."/>
            <person name="Copeland A."/>
            <person name="Lucas S."/>
            <person name="Lapidus A."/>
            <person name="Del Rio T.G."/>
            <person name="Barry K."/>
            <person name="Detter J.C."/>
            <person name="Hammon N."/>
            <person name="Israni S."/>
            <person name="Pitluck S."/>
            <person name="Brettin T."/>
            <person name="Bruce D."/>
            <person name="Han C."/>
            <person name="Tapia R."/>
            <person name="Gilna P."/>
            <person name="Schmutz J."/>
            <person name="Larimer F."/>
            <person name="Land M."/>
            <person name="Kyrpides N.C."/>
            <person name="Mavromatis K."/>
            <person name="Richardson P."/>
            <person name="Rohde M."/>
            <person name="Goeker M."/>
            <person name="Klenk H.P."/>
            <person name="Zhang Y."/>
            <person name="Roberts G.P."/>
            <person name="Reslewic S."/>
            <person name="Schwartz D.C."/>
        </authorList>
    </citation>
    <scope>NUCLEOTIDE SEQUENCE [LARGE SCALE GENOMIC DNA]</scope>
    <source>
        <strain>ATCC 11170 / ATH 1.1.1 / DSM 467 / LMG 4362 / NCIMB 8255 / S1</strain>
    </source>
</reference>
<proteinExistence type="inferred from homology"/>
<organism>
    <name type="scientific">Rhodospirillum rubrum (strain ATCC 11170 / ATH 1.1.1 / DSM 467 / LMG 4362 / NCIMB 8255 / S1)</name>
    <dbReference type="NCBI Taxonomy" id="269796"/>
    <lineage>
        <taxon>Bacteria</taxon>
        <taxon>Pseudomonadati</taxon>
        <taxon>Pseudomonadota</taxon>
        <taxon>Alphaproteobacteria</taxon>
        <taxon>Rhodospirillales</taxon>
        <taxon>Rhodospirillaceae</taxon>
        <taxon>Rhodospirillum</taxon>
    </lineage>
</organism>
<gene>
    <name evidence="1" type="primary">rpsE</name>
    <name type="ordered locus">Rru_A2671</name>
</gene>
<keyword id="KW-1185">Reference proteome</keyword>
<keyword id="KW-0687">Ribonucleoprotein</keyword>
<keyword id="KW-0689">Ribosomal protein</keyword>
<keyword id="KW-0694">RNA-binding</keyword>
<keyword id="KW-0699">rRNA-binding</keyword>
<accession>Q2RQX7</accession>
<dbReference type="EMBL" id="CP000230">
    <property type="protein sequence ID" value="ABC23468.1"/>
    <property type="molecule type" value="Genomic_DNA"/>
</dbReference>
<dbReference type="RefSeq" id="WP_011390421.1">
    <property type="nucleotide sequence ID" value="NC_007643.1"/>
</dbReference>
<dbReference type="RefSeq" id="YP_427755.1">
    <property type="nucleotide sequence ID" value="NC_007643.1"/>
</dbReference>
<dbReference type="SMR" id="Q2RQX7"/>
<dbReference type="STRING" id="269796.Rru_A2671"/>
<dbReference type="EnsemblBacteria" id="ABC23468">
    <property type="protein sequence ID" value="ABC23468"/>
    <property type="gene ID" value="Rru_A2671"/>
</dbReference>
<dbReference type="KEGG" id="rru:Rru_A2671"/>
<dbReference type="PATRIC" id="fig|269796.9.peg.2778"/>
<dbReference type="eggNOG" id="COG0098">
    <property type="taxonomic scope" value="Bacteria"/>
</dbReference>
<dbReference type="HOGENOM" id="CLU_065898_2_2_5"/>
<dbReference type="PhylomeDB" id="Q2RQX7"/>
<dbReference type="Proteomes" id="UP000001929">
    <property type="component" value="Chromosome"/>
</dbReference>
<dbReference type="GO" id="GO:0015935">
    <property type="term" value="C:small ribosomal subunit"/>
    <property type="evidence" value="ECO:0007669"/>
    <property type="project" value="InterPro"/>
</dbReference>
<dbReference type="GO" id="GO:0019843">
    <property type="term" value="F:rRNA binding"/>
    <property type="evidence" value="ECO:0007669"/>
    <property type="project" value="UniProtKB-UniRule"/>
</dbReference>
<dbReference type="GO" id="GO:0003735">
    <property type="term" value="F:structural constituent of ribosome"/>
    <property type="evidence" value="ECO:0007669"/>
    <property type="project" value="InterPro"/>
</dbReference>
<dbReference type="GO" id="GO:0006412">
    <property type="term" value="P:translation"/>
    <property type="evidence" value="ECO:0007669"/>
    <property type="project" value="UniProtKB-UniRule"/>
</dbReference>
<dbReference type="FunFam" id="3.30.160.20:FF:000001">
    <property type="entry name" value="30S ribosomal protein S5"/>
    <property type="match status" value="1"/>
</dbReference>
<dbReference type="FunFam" id="3.30.230.10:FF:000002">
    <property type="entry name" value="30S ribosomal protein S5"/>
    <property type="match status" value="1"/>
</dbReference>
<dbReference type="Gene3D" id="3.30.160.20">
    <property type="match status" value="1"/>
</dbReference>
<dbReference type="Gene3D" id="3.30.230.10">
    <property type="match status" value="1"/>
</dbReference>
<dbReference type="HAMAP" id="MF_01307_B">
    <property type="entry name" value="Ribosomal_uS5_B"/>
    <property type="match status" value="1"/>
</dbReference>
<dbReference type="InterPro" id="IPR020568">
    <property type="entry name" value="Ribosomal_Su5_D2-typ_SF"/>
</dbReference>
<dbReference type="InterPro" id="IPR000851">
    <property type="entry name" value="Ribosomal_uS5"/>
</dbReference>
<dbReference type="InterPro" id="IPR005712">
    <property type="entry name" value="Ribosomal_uS5_bac-type"/>
</dbReference>
<dbReference type="InterPro" id="IPR005324">
    <property type="entry name" value="Ribosomal_uS5_C"/>
</dbReference>
<dbReference type="InterPro" id="IPR013810">
    <property type="entry name" value="Ribosomal_uS5_N"/>
</dbReference>
<dbReference type="InterPro" id="IPR018192">
    <property type="entry name" value="Ribosomal_uS5_N_CS"/>
</dbReference>
<dbReference type="InterPro" id="IPR014721">
    <property type="entry name" value="Ribsml_uS5_D2-typ_fold_subgr"/>
</dbReference>
<dbReference type="NCBIfam" id="TIGR01021">
    <property type="entry name" value="rpsE_bact"/>
    <property type="match status" value="1"/>
</dbReference>
<dbReference type="PANTHER" id="PTHR48277">
    <property type="entry name" value="MITOCHONDRIAL RIBOSOMAL PROTEIN S5"/>
    <property type="match status" value="1"/>
</dbReference>
<dbReference type="PANTHER" id="PTHR48277:SF1">
    <property type="entry name" value="MITOCHONDRIAL RIBOSOMAL PROTEIN S5"/>
    <property type="match status" value="1"/>
</dbReference>
<dbReference type="Pfam" id="PF00333">
    <property type="entry name" value="Ribosomal_S5"/>
    <property type="match status" value="1"/>
</dbReference>
<dbReference type="Pfam" id="PF03719">
    <property type="entry name" value="Ribosomal_S5_C"/>
    <property type="match status" value="1"/>
</dbReference>
<dbReference type="SUPFAM" id="SSF54768">
    <property type="entry name" value="dsRNA-binding domain-like"/>
    <property type="match status" value="1"/>
</dbReference>
<dbReference type="SUPFAM" id="SSF54211">
    <property type="entry name" value="Ribosomal protein S5 domain 2-like"/>
    <property type="match status" value="1"/>
</dbReference>
<dbReference type="PROSITE" id="PS00585">
    <property type="entry name" value="RIBOSOMAL_S5"/>
    <property type="match status" value="1"/>
</dbReference>
<dbReference type="PROSITE" id="PS50881">
    <property type="entry name" value="S5_DSRBD"/>
    <property type="match status" value="1"/>
</dbReference>
<protein>
    <recommendedName>
        <fullName evidence="1">Small ribosomal subunit protein uS5</fullName>
    </recommendedName>
    <alternativeName>
        <fullName evidence="3">30S ribosomal protein S5</fullName>
    </alternativeName>
</protein>
<evidence type="ECO:0000255" key="1">
    <source>
        <dbReference type="HAMAP-Rule" id="MF_01307"/>
    </source>
</evidence>
<evidence type="ECO:0000256" key="2">
    <source>
        <dbReference type="SAM" id="MobiDB-lite"/>
    </source>
</evidence>
<evidence type="ECO:0000305" key="3"/>
<sequence length="199" mass="21417">MARTPNTDRRQRGGDDQRNRSPRSDERDEEFLDKLVHINRVAKVVKGGRRFAFAALVVVGDGKGRVGFGTGKAREVPEAIRKATDQAKRTMIKVPLREGRTLHHDTNGHFGAGWVTLRSAPAGTGIISGGPMRAVFETMGVQDVVGKCTGTTNPYNMIKATFDALVNSQAPRQVAARRGKKVGDIVARRDGAAAAGATE</sequence>
<feature type="chain" id="PRO_0000230367" description="Small ribosomal subunit protein uS5">
    <location>
        <begin position="1"/>
        <end position="199"/>
    </location>
</feature>
<feature type="domain" description="S5 DRBM" evidence="1">
    <location>
        <begin position="31"/>
        <end position="94"/>
    </location>
</feature>
<feature type="region of interest" description="Disordered" evidence="2">
    <location>
        <begin position="1"/>
        <end position="28"/>
    </location>
</feature>